<name>HIS4_CAMJ8</name>
<accession>A8FNR3</accession>
<dbReference type="EC" id="5.3.1.16" evidence="1"/>
<dbReference type="EMBL" id="CP000814">
    <property type="protein sequence ID" value="ABV53100.1"/>
    <property type="molecule type" value="Genomic_DNA"/>
</dbReference>
<dbReference type="RefSeq" id="WP_002866580.1">
    <property type="nucleotide sequence ID" value="NC_009839.1"/>
</dbReference>
<dbReference type="SMR" id="A8FNR3"/>
<dbReference type="KEGG" id="cju:C8J_1503"/>
<dbReference type="HOGENOM" id="CLU_048577_1_2_7"/>
<dbReference type="UniPathway" id="UPA00031">
    <property type="reaction ID" value="UER00009"/>
</dbReference>
<dbReference type="GO" id="GO:0005737">
    <property type="term" value="C:cytoplasm"/>
    <property type="evidence" value="ECO:0007669"/>
    <property type="project" value="UniProtKB-SubCell"/>
</dbReference>
<dbReference type="GO" id="GO:0003949">
    <property type="term" value="F:1-(5-phosphoribosyl)-5-[(5-phosphoribosylamino)methylideneamino]imidazole-4-carboxamide isomerase activity"/>
    <property type="evidence" value="ECO:0007669"/>
    <property type="project" value="UniProtKB-UniRule"/>
</dbReference>
<dbReference type="GO" id="GO:0000105">
    <property type="term" value="P:L-histidine biosynthetic process"/>
    <property type="evidence" value="ECO:0007669"/>
    <property type="project" value="UniProtKB-UniRule"/>
</dbReference>
<dbReference type="GO" id="GO:0000162">
    <property type="term" value="P:L-tryptophan biosynthetic process"/>
    <property type="evidence" value="ECO:0007669"/>
    <property type="project" value="TreeGrafter"/>
</dbReference>
<dbReference type="CDD" id="cd04732">
    <property type="entry name" value="HisA"/>
    <property type="match status" value="1"/>
</dbReference>
<dbReference type="FunFam" id="3.20.20.70:FF:000009">
    <property type="entry name" value="1-(5-phosphoribosyl)-5-[(5-phosphoribosylamino)methylideneamino] imidazole-4-carboxamide isomerase"/>
    <property type="match status" value="1"/>
</dbReference>
<dbReference type="Gene3D" id="3.20.20.70">
    <property type="entry name" value="Aldolase class I"/>
    <property type="match status" value="1"/>
</dbReference>
<dbReference type="HAMAP" id="MF_01014">
    <property type="entry name" value="HisA"/>
    <property type="match status" value="1"/>
</dbReference>
<dbReference type="InterPro" id="IPR013785">
    <property type="entry name" value="Aldolase_TIM"/>
</dbReference>
<dbReference type="InterPro" id="IPR006062">
    <property type="entry name" value="His_biosynth"/>
</dbReference>
<dbReference type="InterPro" id="IPR006063">
    <property type="entry name" value="HisA_bact_arch"/>
</dbReference>
<dbReference type="InterPro" id="IPR044524">
    <property type="entry name" value="Isoase_HisA-like"/>
</dbReference>
<dbReference type="InterPro" id="IPR023016">
    <property type="entry name" value="Isoase_HisA-like_bact"/>
</dbReference>
<dbReference type="InterPro" id="IPR011060">
    <property type="entry name" value="RibuloseP-bd_barrel"/>
</dbReference>
<dbReference type="NCBIfam" id="TIGR00007">
    <property type="entry name" value="1-(5-phosphoribosyl)-5-[(5-phosphoribosylamino)methylideneamino]imidazole-4-carboxamide isomerase"/>
    <property type="match status" value="1"/>
</dbReference>
<dbReference type="PANTHER" id="PTHR43090">
    <property type="entry name" value="1-(5-PHOSPHORIBOSYL)-5-[(5-PHOSPHORIBOSYLAMINO)METHYLIDENEAMINO] IMIDAZOLE-4-CARBOXAMIDE ISOMERASE"/>
    <property type="match status" value="1"/>
</dbReference>
<dbReference type="PANTHER" id="PTHR43090:SF2">
    <property type="entry name" value="1-(5-PHOSPHORIBOSYL)-5-[(5-PHOSPHORIBOSYLAMINO)METHYLIDENEAMINO] IMIDAZOLE-4-CARBOXAMIDE ISOMERASE"/>
    <property type="match status" value="1"/>
</dbReference>
<dbReference type="Pfam" id="PF00977">
    <property type="entry name" value="His_biosynth"/>
    <property type="match status" value="1"/>
</dbReference>
<dbReference type="SUPFAM" id="SSF51366">
    <property type="entry name" value="Ribulose-phoshate binding barrel"/>
    <property type="match status" value="1"/>
</dbReference>
<proteinExistence type="inferred from homology"/>
<sequence length="244" mass="26806">MTQIIPALDLIDGEVVRLVKGDYEQKKVYKYNPLEKFKEYEKAGAKELHLVDLTGAKDPSKRQLALIEKLAKEVNVNLQVGGGIRSKEEVKALLDCGVKRVVIGSMAIKDATLCLEILKEFGSEAIVLALDTILKEDYVVAVNAWQEASDKKLMEVLDFYSNKGLKHILCTDISKDGTMQGVNVRLYKLIHEIFPNICIQASGGVASLKDLENLKGICSGVIVGKALLDGVFSVEEGIRCLQNA</sequence>
<organism>
    <name type="scientific">Campylobacter jejuni subsp. jejuni serotype O:6 (strain 81116 / NCTC 11828)</name>
    <dbReference type="NCBI Taxonomy" id="407148"/>
    <lineage>
        <taxon>Bacteria</taxon>
        <taxon>Pseudomonadati</taxon>
        <taxon>Campylobacterota</taxon>
        <taxon>Epsilonproteobacteria</taxon>
        <taxon>Campylobacterales</taxon>
        <taxon>Campylobacteraceae</taxon>
        <taxon>Campylobacter</taxon>
    </lineage>
</organism>
<feature type="chain" id="PRO_1000072933" description="1-(5-phosphoribosyl)-5-[(5-phosphoribosylamino)methylideneamino] imidazole-4-carboxamide isomerase">
    <location>
        <begin position="1"/>
        <end position="244"/>
    </location>
</feature>
<feature type="active site" description="Proton acceptor" evidence="1">
    <location>
        <position position="9"/>
    </location>
</feature>
<feature type="active site" description="Proton donor" evidence="1">
    <location>
        <position position="131"/>
    </location>
</feature>
<protein>
    <recommendedName>
        <fullName evidence="1">1-(5-phosphoribosyl)-5-[(5-phosphoribosylamino)methylideneamino] imidazole-4-carboxamide isomerase</fullName>
        <ecNumber evidence="1">5.3.1.16</ecNumber>
    </recommendedName>
    <alternativeName>
        <fullName evidence="1">Phosphoribosylformimino-5-aminoimidazole carboxamide ribotide isomerase</fullName>
    </alternativeName>
</protein>
<comment type="catalytic activity">
    <reaction evidence="1">
        <text>1-(5-phospho-beta-D-ribosyl)-5-[(5-phospho-beta-D-ribosylamino)methylideneamino]imidazole-4-carboxamide = 5-[(5-phospho-1-deoxy-D-ribulos-1-ylimino)methylamino]-1-(5-phospho-beta-D-ribosyl)imidazole-4-carboxamide</text>
        <dbReference type="Rhea" id="RHEA:15469"/>
        <dbReference type="ChEBI" id="CHEBI:58435"/>
        <dbReference type="ChEBI" id="CHEBI:58525"/>
        <dbReference type="EC" id="5.3.1.16"/>
    </reaction>
</comment>
<comment type="pathway">
    <text evidence="1">Amino-acid biosynthesis; L-histidine biosynthesis; L-histidine from 5-phospho-alpha-D-ribose 1-diphosphate: step 4/9.</text>
</comment>
<comment type="subcellular location">
    <subcellularLocation>
        <location evidence="1">Cytoplasm</location>
    </subcellularLocation>
</comment>
<comment type="similarity">
    <text evidence="1">Belongs to the HisA/HisF family.</text>
</comment>
<gene>
    <name evidence="1" type="primary">hisA</name>
    <name type="ordered locus">C8J_1503</name>
</gene>
<keyword id="KW-0028">Amino-acid biosynthesis</keyword>
<keyword id="KW-0963">Cytoplasm</keyword>
<keyword id="KW-0368">Histidine biosynthesis</keyword>
<keyword id="KW-0413">Isomerase</keyword>
<evidence type="ECO:0000255" key="1">
    <source>
        <dbReference type="HAMAP-Rule" id="MF_01014"/>
    </source>
</evidence>
<reference key="1">
    <citation type="journal article" date="2007" name="J. Bacteriol.">
        <title>The complete genome sequence of Campylobacter jejuni strain 81116 (NCTC11828).</title>
        <authorList>
            <person name="Pearson B.M."/>
            <person name="Gaskin D.J.H."/>
            <person name="Segers R.P.A.M."/>
            <person name="Wells J.M."/>
            <person name="Nuijten P.J.M."/>
            <person name="van Vliet A.H.M."/>
        </authorList>
    </citation>
    <scope>NUCLEOTIDE SEQUENCE [LARGE SCALE GENOMIC DNA]</scope>
    <source>
        <strain>81116 / NCTC 11828</strain>
    </source>
</reference>